<proteinExistence type="inferred from homology"/>
<comment type="function">
    <text evidence="1">One of the primary rRNA binding proteins, it binds specifically to the 5'-end of 16S ribosomal RNA.</text>
</comment>
<comment type="subunit">
    <text evidence="1">Part of the 30S ribosomal subunit.</text>
</comment>
<comment type="similarity">
    <text evidence="1">Belongs to the universal ribosomal protein uS17 family.</text>
</comment>
<reference key="1">
    <citation type="journal article" date="2001" name="Proc. Natl. Acad. Sci. U.S.A.">
        <title>Complete genomic sequence of Pasteurella multocida Pm70.</title>
        <authorList>
            <person name="May B.J."/>
            <person name="Zhang Q."/>
            <person name="Li L.L."/>
            <person name="Paustian M.L."/>
            <person name="Whittam T.S."/>
            <person name="Kapur V."/>
        </authorList>
    </citation>
    <scope>NUCLEOTIDE SEQUENCE [LARGE SCALE GENOMIC DNA]</scope>
    <source>
        <strain>Pm70</strain>
    </source>
</reference>
<organism>
    <name type="scientific">Pasteurella multocida (strain Pm70)</name>
    <dbReference type="NCBI Taxonomy" id="272843"/>
    <lineage>
        <taxon>Bacteria</taxon>
        <taxon>Pseudomonadati</taxon>
        <taxon>Pseudomonadota</taxon>
        <taxon>Gammaproteobacteria</taxon>
        <taxon>Pasteurellales</taxon>
        <taxon>Pasteurellaceae</taxon>
        <taxon>Pasteurella</taxon>
    </lineage>
</organism>
<accession>Q9CL40</accession>
<sequence>MTDKIRSVQGKVVSDKMDKSFVVAIERKVKHPLYGKFIRRTTKLHVHDENNEAKLGDIVEIKECRPLSKTKSWTLVRVVEKAVVA</sequence>
<protein>
    <recommendedName>
        <fullName evidence="1">Small ribosomal subunit protein uS17</fullName>
    </recommendedName>
    <alternativeName>
        <fullName evidence="2">30S ribosomal protein S17</fullName>
    </alternativeName>
</protein>
<feature type="chain" id="PRO_0000233528" description="Small ribosomal subunit protein uS17">
    <location>
        <begin position="1"/>
        <end position="85"/>
    </location>
</feature>
<gene>
    <name evidence="1" type="primary">rpsQ</name>
    <name type="ordered locus">PM1406</name>
</gene>
<evidence type="ECO:0000255" key="1">
    <source>
        <dbReference type="HAMAP-Rule" id="MF_01345"/>
    </source>
</evidence>
<evidence type="ECO:0000305" key="2"/>
<keyword id="KW-1185">Reference proteome</keyword>
<keyword id="KW-0687">Ribonucleoprotein</keyword>
<keyword id="KW-0689">Ribosomal protein</keyword>
<keyword id="KW-0694">RNA-binding</keyword>
<keyword id="KW-0699">rRNA-binding</keyword>
<dbReference type="EMBL" id="AE004439">
    <property type="protein sequence ID" value="AAK03490.1"/>
    <property type="molecule type" value="Genomic_DNA"/>
</dbReference>
<dbReference type="RefSeq" id="WP_010907154.1">
    <property type="nucleotide sequence ID" value="NC_002663.1"/>
</dbReference>
<dbReference type="SMR" id="Q9CL40"/>
<dbReference type="STRING" id="272843.PM1406"/>
<dbReference type="EnsemblBacteria" id="AAK03490">
    <property type="protein sequence ID" value="AAK03490"/>
    <property type="gene ID" value="PM1406"/>
</dbReference>
<dbReference type="KEGG" id="pmu:PM1406"/>
<dbReference type="PATRIC" id="fig|272843.6.peg.1418"/>
<dbReference type="HOGENOM" id="CLU_073626_1_1_6"/>
<dbReference type="OrthoDB" id="9811714at2"/>
<dbReference type="Proteomes" id="UP000000809">
    <property type="component" value="Chromosome"/>
</dbReference>
<dbReference type="GO" id="GO:0022627">
    <property type="term" value="C:cytosolic small ribosomal subunit"/>
    <property type="evidence" value="ECO:0007669"/>
    <property type="project" value="TreeGrafter"/>
</dbReference>
<dbReference type="GO" id="GO:0019843">
    <property type="term" value="F:rRNA binding"/>
    <property type="evidence" value="ECO:0007669"/>
    <property type="project" value="UniProtKB-UniRule"/>
</dbReference>
<dbReference type="GO" id="GO:0003735">
    <property type="term" value="F:structural constituent of ribosome"/>
    <property type="evidence" value="ECO:0007669"/>
    <property type="project" value="InterPro"/>
</dbReference>
<dbReference type="GO" id="GO:0006412">
    <property type="term" value="P:translation"/>
    <property type="evidence" value="ECO:0007669"/>
    <property type="project" value="UniProtKB-UniRule"/>
</dbReference>
<dbReference type="CDD" id="cd00364">
    <property type="entry name" value="Ribosomal_uS17"/>
    <property type="match status" value="1"/>
</dbReference>
<dbReference type="FunFam" id="2.40.50.140:FF:000014">
    <property type="entry name" value="30S ribosomal protein S17"/>
    <property type="match status" value="1"/>
</dbReference>
<dbReference type="Gene3D" id="2.40.50.140">
    <property type="entry name" value="Nucleic acid-binding proteins"/>
    <property type="match status" value="1"/>
</dbReference>
<dbReference type="HAMAP" id="MF_01345_B">
    <property type="entry name" value="Ribosomal_uS17_B"/>
    <property type="match status" value="1"/>
</dbReference>
<dbReference type="InterPro" id="IPR012340">
    <property type="entry name" value="NA-bd_OB-fold"/>
</dbReference>
<dbReference type="InterPro" id="IPR000266">
    <property type="entry name" value="Ribosomal_uS17"/>
</dbReference>
<dbReference type="InterPro" id="IPR019984">
    <property type="entry name" value="Ribosomal_uS17_bact/chlr"/>
</dbReference>
<dbReference type="InterPro" id="IPR019979">
    <property type="entry name" value="Ribosomal_uS17_CS"/>
</dbReference>
<dbReference type="NCBIfam" id="NF004123">
    <property type="entry name" value="PRK05610.1"/>
    <property type="match status" value="1"/>
</dbReference>
<dbReference type="NCBIfam" id="TIGR03635">
    <property type="entry name" value="uS17_bact"/>
    <property type="match status" value="1"/>
</dbReference>
<dbReference type="PANTHER" id="PTHR10744">
    <property type="entry name" value="40S RIBOSOMAL PROTEIN S11 FAMILY MEMBER"/>
    <property type="match status" value="1"/>
</dbReference>
<dbReference type="PANTHER" id="PTHR10744:SF1">
    <property type="entry name" value="SMALL RIBOSOMAL SUBUNIT PROTEIN US17M"/>
    <property type="match status" value="1"/>
</dbReference>
<dbReference type="Pfam" id="PF00366">
    <property type="entry name" value="Ribosomal_S17"/>
    <property type="match status" value="1"/>
</dbReference>
<dbReference type="PRINTS" id="PR00973">
    <property type="entry name" value="RIBOSOMALS17"/>
</dbReference>
<dbReference type="SUPFAM" id="SSF50249">
    <property type="entry name" value="Nucleic acid-binding proteins"/>
    <property type="match status" value="1"/>
</dbReference>
<dbReference type="PROSITE" id="PS00056">
    <property type="entry name" value="RIBOSOMAL_S17"/>
    <property type="match status" value="1"/>
</dbReference>
<name>RS17_PASMU</name>